<proteinExistence type="evidence at protein level"/>
<organismHost>
    <name type="scientific">Pseudomonas aeruginosa</name>
    <dbReference type="NCBI Taxonomy" id="287"/>
</organismHost>
<protein>
    <recommendedName>
        <fullName evidence="2 5">Capsid polyprotein</fullName>
    </recommendedName>
    <alternativeName>
        <fullName evidence="2">ORF3 protein</fullName>
        <ecNumber evidence="1">3.4.-.-</ecNumber>
    </alternativeName>
    <component>
        <recommendedName>
            <fullName evidence="2">Capsid protein</fullName>
        </recommendedName>
    </component>
</protein>
<dbReference type="EC" id="3.4.-.-" evidence="1"/>
<dbReference type="EMBL" id="AP009624">
    <property type="protein sequence ID" value="BAG74987.1"/>
    <property type="molecule type" value="Genomic_DNA"/>
</dbReference>
<dbReference type="RefSeq" id="YP_002284337.1">
    <property type="nucleotide sequence ID" value="NC_011373.1"/>
</dbReference>
<dbReference type="GeneID" id="6989668"/>
<dbReference type="KEGG" id="vg:6989668"/>
<dbReference type="OrthoDB" id="1074at10239"/>
<dbReference type="Proteomes" id="UP000001041">
    <property type="component" value="Genome"/>
</dbReference>
<dbReference type="GO" id="GO:0039620">
    <property type="term" value="C:T=7 icosahedral viral capsid"/>
    <property type="evidence" value="ECO:0007669"/>
    <property type="project" value="UniProtKB-KW"/>
</dbReference>
<dbReference type="GO" id="GO:0019028">
    <property type="term" value="C:viral capsid"/>
    <property type="evidence" value="ECO:0000314"/>
    <property type="project" value="UniProtKB"/>
</dbReference>
<dbReference type="GO" id="GO:0008233">
    <property type="term" value="F:peptidase activity"/>
    <property type="evidence" value="ECO:0007669"/>
    <property type="project" value="UniProtKB-KW"/>
</dbReference>
<dbReference type="GO" id="GO:0006508">
    <property type="term" value="P:proteolysis"/>
    <property type="evidence" value="ECO:0007669"/>
    <property type="project" value="UniProtKB-KW"/>
</dbReference>
<dbReference type="GO" id="GO:0046797">
    <property type="term" value="P:viral procapsid maturation"/>
    <property type="evidence" value="ECO:0007669"/>
    <property type="project" value="UniProtKB-KW"/>
</dbReference>
<dbReference type="Gene3D" id="3.30.2320.10">
    <property type="entry name" value="hypothetical protein PF0899 domain"/>
    <property type="match status" value="1"/>
</dbReference>
<dbReference type="Gene3D" id="3.30.2400.10">
    <property type="entry name" value="Major capsid protein gp5"/>
    <property type="match status" value="1"/>
</dbReference>
<dbReference type="InterPro" id="IPR054613">
    <property type="entry name" value="Peptidase_S78_dom"/>
</dbReference>
<dbReference type="InterPro" id="IPR024455">
    <property type="entry name" value="Phage_capsid"/>
</dbReference>
<dbReference type="InterPro" id="IPR054612">
    <property type="entry name" value="Phage_capsid-like_C"/>
</dbReference>
<dbReference type="NCBIfam" id="TIGR01554">
    <property type="entry name" value="major_cap_HK97"/>
    <property type="match status" value="1"/>
</dbReference>
<dbReference type="Pfam" id="PF04586">
    <property type="entry name" value="Peptidase_S78"/>
    <property type="match status" value="1"/>
</dbReference>
<dbReference type="Pfam" id="PF05065">
    <property type="entry name" value="Phage_capsid"/>
    <property type="match status" value="1"/>
</dbReference>
<dbReference type="SUPFAM" id="SSF56563">
    <property type="entry name" value="Major capsid protein gp5"/>
    <property type="match status" value="1"/>
</dbReference>
<sequence>MKTNRAYSTLEVKALDDEKRVITGIASTPSPDRMQDVVEPKGAQFKLPIPFLWQHNHDEPIGHVTEAKVTQKGIEVSVQLTQVEEPGKLKDRLDEAWQSIKSGLVRGLSIGFSAKEFEQIPGSWGLRFLSWEWFELSAVTIPANAEATITSVKSIDREQRAALGIKSVPVVRVTPAGASAIKTKTIKVPKPQEGNDMKTTAEQIAEFEATRVTKAAEMEAIMTKAAEAGETLDAEQSEQFDTLEAEIAAIDKHIGRLKQMQKAQAANAKPVTEEAGAQRMANVKALDFKEVQVRAKNTQKLEPGIAFARAAKCLALGHLEHRDAIGIAKSLYDGQDSIIAATQRLVTKAAVAAATTSDATWAGPLVGDETSVFADFVEYLRPQTILGRFGTNGIPSLRRVPFRVPLIGQTSGGDGYWVGEGQAKPLTKFDFERKTLEPLKVANIAVATMEVIRDSSPSADVIIRDQLAAALRERLDIDFIDPAKAAVAGVSPASILNGVAGIPSSGNTADDVRADIRALFNAFIAANNAPTSGVWLMPATTALALSLMQNPLGQAEFPGISMTGGTLFGLPVIVSEYIPTASAGAVVALVNASDIYLGDEGGVDLSMSTEASLQMDNAPDNPTTASTVLVSLWQRNLVGFRAERAINWARRRASAVAYLTGVNWGAA</sequence>
<reference key="1">
    <citation type="journal article" date="2009" name="Virus Res.">
        <title>Characteristics of a novel Pseudomonas aeruginosa bacteriophage, PAJU2, which is genetically related to bacteriophage D3.</title>
        <authorList>
            <person name="Uchiyama J."/>
            <person name="Rashel M."/>
            <person name="Matsumoto T."/>
            <person name="Sumiyama Y."/>
            <person name="Wakiguchi H."/>
            <person name="Matsuzaki S."/>
        </authorList>
    </citation>
    <scope>NUCLEOTIDE SEQUENCE [GENOMIC DNA]</scope>
    <scope>PROTEIN SEQUENCE OF 349-362</scope>
    <scope>FUNCTION (CAPSID PROTEIN)</scope>
    <scope>PROTEOLYTIC CLEAVAGE</scope>
</reference>
<evidence type="ECO:0000269" key="1">
    <source>
    </source>
</evidence>
<evidence type="ECO:0000303" key="2">
    <source>
    </source>
</evidence>
<evidence type="ECO:0000305" key="3"/>
<evidence type="ECO:0000305" key="4">
    <source>
    </source>
</evidence>
<evidence type="ECO:0000312" key="5">
    <source>
        <dbReference type="EMBL" id="BAG74987.1"/>
    </source>
</evidence>
<comment type="function">
    <molecule>Capsid polyprotein</molecule>
    <text evidence="1">The C-terminus contains the capsid protein. The N-terminal region may act as a prohead protease.</text>
</comment>
<comment type="subcellular location">
    <molecule>Capsid protein</molecule>
    <subcellularLocation>
        <location evidence="1">Virion</location>
    </subcellularLocation>
</comment>
<comment type="PTM">
    <text evidence="4">The prohead protease may be autocatalytically cleaved giving rise to the mature capsid protein.</text>
</comment>
<feature type="chain" id="PRO_0000363886" description="Capsid polyprotein">
    <location>
        <begin position="1"/>
        <end position="667"/>
    </location>
</feature>
<feature type="chain" id="PRO_0000326456" description="Capsid protein" evidence="1">
    <location>
        <begin position="349"/>
        <end position="667"/>
    </location>
</feature>
<feature type="region of interest" description="Prohead protease activity" evidence="4">
    <location>
        <begin position="8"/>
        <end position="154"/>
    </location>
</feature>
<feature type="site" description="Cleavage" evidence="1">
    <location>
        <begin position="348"/>
        <end position="349"/>
    </location>
</feature>
<feature type="sequence conflict" description="In Ref. 1; AA sequence." evidence="3" ref="1">
    <location>
        <position position="352"/>
    </location>
</feature>
<feature type="sequence conflict" description="In Ref. 1; AA sequence." evidence="3" ref="1">
    <original>W</original>
    <variation>G</variation>
    <location>
        <position position="361"/>
    </location>
</feature>
<keyword id="KW-0068">Autocatalytic cleavage</keyword>
<keyword id="KW-0167">Capsid protein</keyword>
<keyword id="KW-0903">Direct protein sequencing</keyword>
<keyword id="KW-0378">Hydrolase</keyword>
<keyword id="KW-0645">Protease</keyword>
<keyword id="KW-1185">Reference proteome</keyword>
<keyword id="KW-1145">T=7 icosahedral capsid protein</keyword>
<keyword id="KW-0118">Viral capsid assembly</keyword>
<keyword id="KW-1273">Viral capsid maturation</keyword>
<keyword id="KW-1188">Viral release from host cell</keyword>
<keyword id="KW-0946">Virion</keyword>
<name>CAPSD_BPPAJ</name>
<accession>P85500</accession>
<accession>B5WZR9</accession>
<organism>
    <name type="scientific">Pseudomonas phage PAJU2</name>
    <dbReference type="NCBI Taxonomy" id="504346"/>
    <lineage>
        <taxon>Viruses</taxon>
        <taxon>Duplodnaviria</taxon>
        <taxon>Heunggongvirae</taxon>
        <taxon>Uroviricota</taxon>
        <taxon>Caudoviricetes</taxon>
        <taxon>Detrevirus</taxon>
    </lineage>
</organism>